<proteinExistence type="inferred from homology"/>
<gene>
    <name evidence="1" type="primary">mobA</name>
    <name type="ordered locus">BCG_2473c</name>
</gene>
<evidence type="ECO:0000255" key="1">
    <source>
        <dbReference type="HAMAP-Rule" id="MF_00316"/>
    </source>
</evidence>
<dbReference type="EC" id="2.7.7.77" evidence="1"/>
<dbReference type="EMBL" id="AM408590">
    <property type="protein sequence ID" value="CAL72461.1"/>
    <property type="molecule type" value="Genomic_DNA"/>
</dbReference>
<dbReference type="RefSeq" id="WP_003412618.1">
    <property type="nucleotide sequence ID" value="NC_008769.1"/>
</dbReference>
<dbReference type="SMR" id="A1KLE9"/>
<dbReference type="GeneID" id="45426443"/>
<dbReference type="KEGG" id="mbb:BCG_2473c"/>
<dbReference type="HOGENOM" id="CLU_055597_3_2_11"/>
<dbReference type="Proteomes" id="UP000001472">
    <property type="component" value="Chromosome"/>
</dbReference>
<dbReference type="GO" id="GO:0005737">
    <property type="term" value="C:cytoplasm"/>
    <property type="evidence" value="ECO:0007669"/>
    <property type="project" value="UniProtKB-SubCell"/>
</dbReference>
<dbReference type="GO" id="GO:0005525">
    <property type="term" value="F:GTP binding"/>
    <property type="evidence" value="ECO:0007669"/>
    <property type="project" value="UniProtKB-UniRule"/>
</dbReference>
<dbReference type="GO" id="GO:0046872">
    <property type="term" value="F:metal ion binding"/>
    <property type="evidence" value="ECO:0007669"/>
    <property type="project" value="UniProtKB-KW"/>
</dbReference>
<dbReference type="GO" id="GO:0061603">
    <property type="term" value="F:molybdenum cofactor guanylyltransferase activity"/>
    <property type="evidence" value="ECO:0007669"/>
    <property type="project" value="UniProtKB-EC"/>
</dbReference>
<dbReference type="GO" id="GO:0006777">
    <property type="term" value="P:Mo-molybdopterin cofactor biosynthetic process"/>
    <property type="evidence" value="ECO:0007669"/>
    <property type="project" value="UniProtKB-KW"/>
</dbReference>
<dbReference type="CDD" id="cd02503">
    <property type="entry name" value="MobA"/>
    <property type="match status" value="1"/>
</dbReference>
<dbReference type="Gene3D" id="3.90.550.10">
    <property type="entry name" value="Spore Coat Polysaccharide Biosynthesis Protein SpsA, Chain A"/>
    <property type="match status" value="1"/>
</dbReference>
<dbReference type="HAMAP" id="MF_00316">
    <property type="entry name" value="MobA"/>
    <property type="match status" value="1"/>
</dbReference>
<dbReference type="InterPro" id="IPR025877">
    <property type="entry name" value="MobA-like_NTP_Trfase"/>
</dbReference>
<dbReference type="InterPro" id="IPR013482">
    <property type="entry name" value="Molybde_CF_guanTrfase"/>
</dbReference>
<dbReference type="InterPro" id="IPR029044">
    <property type="entry name" value="Nucleotide-diphossugar_trans"/>
</dbReference>
<dbReference type="NCBIfam" id="NF001855">
    <property type="entry name" value="PRK00576.1"/>
    <property type="match status" value="1"/>
</dbReference>
<dbReference type="PANTHER" id="PTHR19136">
    <property type="entry name" value="MOLYBDENUM COFACTOR GUANYLYLTRANSFERASE"/>
    <property type="match status" value="1"/>
</dbReference>
<dbReference type="PANTHER" id="PTHR19136:SF81">
    <property type="entry name" value="MOLYBDENUM COFACTOR GUANYLYLTRANSFERASE"/>
    <property type="match status" value="1"/>
</dbReference>
<dbReference type="Pfam" id="PF12804">
    <property type="entry name" value="NTP_transf_3"/>
    <property type="match status" value="1"/>
</dbReference>
<dbReference type="SUPFAM" id="SSF53448">
    <property type="entry name" value="Nucleotide-diphospho-sugar transferases"/>
    <property type="match status" value="1"/>
</dbReference>
<keyword id="KW-0963">Cytoplasm</keyword>
<keyword id="KW-0342">GTP-binding</keyword>
<keyword id="KW-0460">Magnesium</keyword>
<keyword id="KW-0479">Metal-binding</keyword>
<keyword id="KW-0501">Molybdenum cofactor biosynthesis</keyword>
<keyword id="KW-0547">Nucleotide-binding</keyword>
<keyword id="KW-0808">Transferase</keyword>
<organism>
    <name type="scientific">Mycobacterium bovis (strain BCG / Pasteur 1173P2)</name>
    <dbReference type="NCBI Taxonomy" id="410289"/>
    <lineage>
        <taxon>Bacteria</taxon>
        <taxon>Bacillati</taxon>
        <taxon>Actinomycetota</taxon>
        <taxon>Actinomycetes</taxon>
        <taxon>Mycobacteriales</taxon>
        <taxon>Mycobacteriaceae</taxon>
        <taxon>Mycobacterium</taxon>
        <taxon>Mycobacterium tuberculosis complex</taxon>
    </lineage>
</organism>
<sequence length="201" mass="21084">MAELAPDTVPLAGVVLAGGESRRMGRDKATLPLPGGTTTLVEHMVGILGQRCAPVFVMAAPGQPLPTLPVPVLRDELPGLGPLPATGRGLRAAAEAGVRLAFVCAVDMPYLTVELIEDLARRAVQTDAEVVLPWDGRNHYLAAVYRTDLADRVDTLVGAGERKMSALVDASDALRIVMADSRPLTNVNSAAGLHAPMQPGR</sequence>
<reference key="1">
    <citation type="journal article" date="2007" name="Proc. Natl. Acad. Sci. U.S.A.">
        <title>Genome plasticity of BCG and impact on vaccine efficacy.</title>
        <authorList>
            <person name="Brosch R."/>
            <person name="Gordon S.V."/>
            <person name="Garnier T."/>
            <person name="Eiglmeier K."/>
            <person name="Frigui W."/>
            <person name="Valenti P."/>
            <person name="Dos Santos S."/>
            <person name="Duthoy S."/>
            <person name="Lacroix C."/>
            <person name="Garcia-Pelayo C."/>
            <person name="Inwald J.K."/>
            <person name="Golby P."/>
            <person name="Garcia J.N."/>
            <person name="Hewinson R.G."/>
            <person name="Behr M.A."/>
            <person name="Quail M.A."/>
            <person name="Churcher C."/>
            <person name="Barrell B.G."/>
            <person name="Parkhill J."/>
            <person name="Cole S.T."/>
        </authorList>
    </citation>
    <scope>NUCLEOTIDE SEQUENCE [LARGE SCALE GENOMIC DNA]</scope>
    <source>
        <strain>BCG / Pasteur 1173P2</strain>
    </source>
</reference>
<feature type="chain" id="PRO_1000019124" description="Probable molybdenum cofactor guanylyltransferase">
    <location>
        <begin position="1"/>
        <end position="201"/>
    </location>
</feature>
<feature type="binding site" evidence="1">
    <location>
        <begin position="16"/>
        <end position="18"/>
    </location>
    <ligand>
        <name>GTP</name>
        <dbReference type="ChEBI" id="CHEBI:37565"/>
    </ligand>
</feature>
<feature type="binding site" evidence="1">
    <location>
        <position position="28"/>
    </location>
    <ligand>
        <name>GTP</name>
        <dbReference type="ChEBI" id="CHEBI:37565"/>
    </ligand>
</feature>
<feature type="binding site" evidence="1">
    <location>
        <position position="75"/>
    </location>
    <ligand>
        <name>GTP</name>
        <dbReference type="ChEBI" id="CHEBI:37565"/>
    </ligand>
</feature>
<feature type="binding site" evidence="1">
    <location>
        <position position="107"/>
    </location>
    <ligand>
        <name>GTP</name>
        <dbReference type="ChEBI" id="CHEBI:37565"/>
    </ligand>
</feature>
<feature type="binding site" evidence="1">
    <location>
        <position position="107"/>
    </location>
    <ligand>
        <name>Mg(2+)</name>
        <dbReference type="ChEBI" id="CHEBI:18420"/>
    </ligand>
</feature>
<name>MOBA_MYCBP</name>
<protein>
    <recommendedName>
        <fullName evidence="1">Probable molybdenum cofactor guanylyltransferase</fullName>
        <shortName evidence="1">MoCo guanylyltransferase</shortName>
        <ecNumber evidence="1">2.7.7.77</ecNumber>
    </recommendedName>
    <alternativeName>
        <fullName evidence="1">GTP:molybdopterin guanylyltransferase</fullName>
    </alternativeName>
    <alternativeName>
        <fullName evidence="1">Mo-MPT guanylyltransferase</fullName>
    </alternativeName>
    <alternativeName>
        <fullName evidence="1">Molybdopterin guanylyltransferase</fullName>
    </alternativeName>
    <alternativeName>
        <fullName evidence="1">Molybdopterin-guanine dinucleotide synthase</fullName>
        <shortName evidence="1">MGD synthase</shortName>
    </alternativeName>
</protein>
<comment type="function">
    <text evidence="1">Transfers a GMP moiety from GTP to Mo-molybdopterin (Mo-MPT) cofactor (Moco or molybdenum cofactor) to form Mo-molybdopterin guanine dinucleotide (Mo-MGD) cofactor.</text>
</comment>
<comment type="catalytic activity">
    <reaction evidence="1">
        <text>Mo-molybdopterin + GTP + H(+) = Mo-molybdopterin guanine dinucleotide + diphosphate</text>
        <dbReference type="Rhea" id="RHEA:34243"/>
        <dbReference type="ChEBI" id="CHEBI:15378"/>
        <dbReference type="ChEBI" id="CHEBI:33019"/>
        <dbReference type="ChEBI" id="CHEBI:37565"/>
        <dbReference type="ChEBI" id="CHEBI:71302"/>
        <dbReference type="ChEBI" id="CHEBI:71310"/>
        <dbReference type="EC" id="2.7.7.77"/>
    </reaction>
</comment>
<comment type="cofactor">
    <cofactor evidence="1">
        <name>Mg(2+)</name>
        <dbReference type="ChEBI" id="CHEBI:18420"/>
    </cofactor>
</comment>
<comment type="subcellular location">
    <subcellularLocation>
        <location evidence="1">Cytoplasm</location>
    </subcellularLocation>
</comment>
<comment type="domain">
    <text evidence="1">The N-terminal domain determines nucleotide recognition and specific binding, while the C-terminal domain determines the specific binding to the target protein.</text>
</comment>
<comment type="similarity">
    <text evidence="1">Belongs to the MobA family.</text>
</comment>
<accession>A1KLE9</accession>